<reference key="1">
    <citation type="journal article" date="2005" name="Nature">
        <title>Genomic sequence of the pathogenic and allergenic filamentous fungus Aspergillus fumigatus.</title>
        <authorList>
            <person name="Nierman W.C."/>
            <person name="Pain A."/>
            <person name="Anderson M.J."/>
            <person name="Wortman J.R."/>
            <person name="Kim H.S."/>
            <person name="Arroyo J."/>
            <person name="Berriman M."/>
            <person name="Abe K."/>
            <person name="Archer D.B."/>
            <person name="Bermejo C."/>
            <person name="Bennett J.W."/>
            <person name="Bowyer P."/>
            <person name="Chen D."/>
            <person name="Collins M."/>
            <person name="Coulsen R."/>
            <person name="Davies R."/>
            <person name="Dyer P.S."/>
            <person name="Farman M.L."/>
            <person name="Fedorova N."/>
            <person name="Fedorova N.D."/>
            <person name="Feldblyum T.V."/>
            <person name="Fischer R."/>
            <person name="Fosker N."/>
            <person name="Fraser A."/>
            <person name="Garcia J.L."/>
            <person name="Garcia M.J."/>
            <person name="Goble A."/>
            <person name="Goldman G.H."/>
            <person name="Gomi K."/>
            <person name="Griffith-Jones S."/>
            <person name="Gwilliam R."/>
            <person name="Haas B.J."/>
            <person name="Haas H."/>
            <person name="Harris D.E."/>
            <person name="Horiuchi H."/>
            <person name="Huang J."/>
            <person name="Humphray S."/>
            <person name="Jimenez J."/>
            <person name="Keller N."/>
            <person name="Khouri H."/>
            <person name="Kitamoto K."/>
            <person name="Kobayashi T."/>
            <person name="Konzack S."/>
            <person name="Kulkarni R."/>
            <person name="Kumagai T."/>
            <person name="Lafton A."/>
            <person name="Latge J.-P."/>
            <person name="Li W."/>
            <person name="Lord A."/>
            <person name="Lu C."/>
            <person name="Majoros W.H."/>
            <person name="May G.S."/>
            <person name="Miller B.L."/>
            <person name="Mohamoud Y."/>
            <person name="Molina M."/>
            <person name="Monod M."/>
            <person name="Mouyna I."/>
            <person name="Mulligan S."/>
            <person name="Murphy L.D."/>
            <person name="O'Neil S."/>
            <person name="Paulsen I."/>
            <person name="Penalva M.A."/>
            <person name="Pertea M."/>
            <person name="Price C."/>
            <person name="Pritchard B.L."/>
            <person name="Quail M.A."/>
            <person name="Rabbinowitsch E."/>
            <person name="Rawlins N."/>
            <person name="Rajandream M.A."/>
            <person name="Reichard U."/>
            <person name="Renauld H."/>
            <person name="Robson G.D."/>
            <person name="Rodriguez de Cordoba S."/>
            <person name="Rodriguez-Pena J.M."/>
            <person name="Ronning C.M."/>
            <person name="Rutter S."/>
            <person name="Salzberg S.L."/>
            <person name="Sanchez M."/>
            <person name="Sanchez-Ferrero J.C."/>
            <person name="Saunders D."/>
            <person name="Seeger K."/>
            <person name="Squares R."/>
            <person name="Squares S."/>
            <person name="Takeuchi M."/>
            <person name="Tekaia F."/>
            <person name="Turner G."/>
            <person name="Vazquez de Aldana C.R."/>
            <person name="Weidman J."/>
            <person name="White O."/>
            <person name="Woodward J.R."/>
            <person name="Yu J.-H."/>
            <person name="Fraser C.M."/>
            <person name="Galagan J.E."/>
            <person name="Asai K."/>
            <person name="Machida M."/>
            <person name="Hall N."/>
            <person name="Barrell B.G."/>
            <person name="Denning D.W."/>
        </authorList>
    </citation>
    <scope>NUCLEOTIDE SEQUENCE [LARGE SCALE GENOMIC DNA]</scope>
    <source>
        <strain>ATCC MYA-4609 / CBS 101355 / FGSC A1100 / Af293</strain>
    </source>
</reference>
<reference key="2">
    <citation type="journal article" date="2020" name="MBio">
        <title>Characterization of the efflux capability and substrate specificity of Aspergillus fumigatus PDR5-like ABC transporters expressed in Saccharomyces cerevisiae.</title>
        <authorList>
            <person name="Esquivel B.D."/>
            <person name="Rybak J.M."/>
            <person name="Barker K.S."/>
            <person name="Fortwendel J.R."/>
            <person name="Rogers P.D."/>
            <person name="White T.C."/>
        </authorList>
    </citation>
    <scope>FUNCTION</scope>
    <scope>CATALYTIC ACTIVITY</scope>
    <scope>SUBSTRATE SPECIFICITY</scope>
    <scope>ACTIVITY REGULATION</scope>
    <scope>INDUCTION</scope>
</reference>
<feature type="chain" id="PRO_0000452662" description="ABC multidrug transporter I">
    <location>
        <begin position="1"/>
        <end position="1485"/>
    </location>
</feature>
<feature type="transmembrane region" description="Helical" evidence="1">
    <location>
        <begin position="522"/>
        <end position="542"/>
    </location>
</feature>
<feature type="transmembrane region" description="Helical" evidence="1">
    <location>
        <begin position="556"/>
        <end position="576"/>
    </location>
</feature>
<feature type="transmembrane region" description="Helical" evidence="1">
    <location>
        <begin position="600"/>
        <end position="620"/>
    </location>
</feature>
<feature type="transmembrane region" description="Helical" evidence="1">
    <location>
        <begin position="623"/>
        <end position="643"/>
    </location>
</feature>
<feature type="transmembrane region" description="Helical" evidence="1">
    <location>
        <begin position="664"/>
        <end position="684"/>
    </location>
</feature>
<feature type="transmembrane region" description="Helical" evidence="1">
    <location>
        <begin position="691"/>
        <end position="711"/>
    </location>
</feature>
<feature type="transmembrane region" description="Helical" evidence="1">
    <location>
        <begin position="774"/>
        <end position="794"/>
    </location>
</feature>
<feature type="transmembrane region" description="Helical" evidence="1">
    <location>
        <begin position="1184"/>
        <end position="1204"/>
    </location>
</feature>
<feature type="transmembrane region" description="Helical" evidence="1">
    <location>
        <begin position="1211"/>
        <end position="1231"/>
    </location>
</feature>
<feature type="transmembrane region" description="Helical" evidence="1">
    <location>
        <begin position="1268"/>
        <end position="1288"/>
    </location>
</feature>
<feature type="transmembrane region" description="Helical" evidence="1">
    <location>
        <begin position="1299"/>
        <end position="1319"/>
    </location>
</feature>
<feature type="transmembrane region" description="Helical" evidence="1">
    <location>
        <begin position="1325"/>
        <end position="1345"/>
    </location>
</feature>
<feature type="transmembrane region" description="Helical" evidence="1">
    <location>
        <begin position="1449"/>
        <end position="1469"/>
    </location>
</feature>
<feature type="domain" description="ABC transporter 1" evidence="2">
    <location>
        <begin position="163"/>
        <end position="411"/>
    </location>
</feature>
<feature type="domain" description="ABC transporter 2" evidence="2">
    <location>
        <begin position="846"/>
        <end position="1089"/>
    </location>
</feature>
<feature type="region of interest" description="Disordered" evidence="4">
    <location>
        <begin position="1"/>
        <end position="57"/>
    </location>
</feature>
<feature type="region of interest" description="Disordered" evidence="4">
    <location>
        <begin position="75"/>
        <end position="111"/>
    </location>
</feature>
<feature type="compositionally biased region" description="Polar residues" evidence="4">
    <location>
        <begin position="8"/>
        <end position="24"/>
    </location>
</feature>
<feature type="compositionally biased region" description="Basic and acidic residues" evidence="4">
    <location>
        <begin position="85"/>
        <end position="95"/>
    </location>
</feature>
<feature type="binding site" evidence="2">
    <location>
        <begin position="882"/>
        <end position="889"/>
    </location>
    <ligand>
        <name>ATP</name>
        <dbReference type="ChEBI" id="CHEBI:30616"/>
    </ligand>
</feature>
<feature type="glycosylation site" description="N-linked (GlcNAc...) asparagine" evidence="3">
    <location>
        <position position="12"/>
    </location>
</feature>
<feature type="glycosylation site" description="N-linked (GlcNAc...) asparagine" evidence="3">
    <location>
        <position position="132"/>
    </location>
</feature>
<feature type="glycosylation site" description="N-linked (GlcNAc...) asparagine" evidence="3">
    <location>
        <position position="335"/>
    </location>
</feature>
<feature type="glycosylation site" description="N-linked (GlcNAc...) asparagine" evidence="3">
    <location>
        <position position="451"/>
    </location>
</feature>
<feature type="glycosylation site" description="N-linked (GlcNAc...) asparagine" evidence="3">
    <location>
        <position position="1396"/>
    </location>
</feature>
<feature type="glycosylation site" description="N-linked (GlcNAc...) asparagine" evidence="3">
    <location>
        <position position="1418"/>
    </location>
</feature>
<organism>
    <name type="scientific">Aspergillus fumigatus (strain ATCC MYA-4609 / CBS 101355 / FGSC A1100 / Af293)</name>
    <name type="common">Neosartorya fumigata</name>
    <dbReference type="NCBI Taxonomy" id="330879"/>
    <lineage>
        <taxon>Eukaryota</taxon>
        <taxon>Fungi</taxon>
        <taxon>Dikarya</taxon>
        <taxon>Ascomycota</taxon>
        <taxon>Pezizomycotina</taxon>
        <taxon>Eurotiomycetes</taxon>
        <taxon>Eurotiomycetidae</taxon>
        <taxon>Eurotiales</taxon>
        <taxon>Aspergillaceae</taxon>
        <taxon>Aspergillus</taxon>
        <taxon>Aspergillus subgen. Fumigati</taxon>
    </lineage>
</organism>
<name>ABCI_ASPFU</name>
<evidence type="ECO:0000255" key="1"/>
<evidence type="ECO:0000255" key="2">
    <source>
        <dbReference type="PROSITE-ProRule" id="PRU00434"/>
    </source>
</evidence>
<evidence type="ECO:0000255" key="3">
    <source>
        <dbReference type="PROSITE-ProRule" id="PRU00498"/>
    </source>
</evidence>
<evidence type="ECO:0000256" key="4">
    <source>
        <dbReference type="SAM" id="MobiDB-lite"/>
    </source>
</evidence>
<evidence type="ECO:0000269" key="5">
    <source>
    </source>
</evidence>
<evidence type="ECO:0000303" key="6">
    <source>
    </source>
</evidence>
<evidence type="ECO:0000305" key="7"/>
<evidence type="ECO:0000305" key="8">
    <source>
    </source>
</evidence>
<proteinExistence type="evidence at protein level"/>
<comment type="function">
    <text evidence="5">ABC efflux transporter that confers resistance to fluconazole (FLC) but shows no resistance to other azoles (PubMed:32209680). Is also able to transport rhodamine 6G (R-6G), a known substrate for many ABC transporters (PubMed:32209680).</text>
</comment>
<comment type="catalytic activity">
    <reaction evidence="5">
        <text>fluconazole(in) + ATP + H2O = fluconazole(out) + ADP + phosphate + H(+)</text>
        <dbReference type="Rhea" id="RHEA:61916"/>
        <dbReference type="ChEBI" id="CHEBI:15377"/>
        <dbReference type="ChEBI" id="CHEBI:15378"/>
        <dbReference type="ChEBI" id="CHEBI:30616"/>
        <dbReference type="ChEBI" id="CHEBI:43474"/>
        <dbReference type="ChEBI" id="CHEBI:46081"/>
        <dbReference type="ChEBI" id="CHEBI:456216"/>
    </reaction>
    <physiologicalReaction direction="left-to-right" evidence="5">
        <dbReference type="Rhea" id="RHEA:61917"/>
    </physiologicalReaction>
</comment>
<comment type="activity regulation">
    <text evidence="5">The efflux inhibitor FK506 does not impair the transport activity.</text>
</comment>
<comment type="subcellular location">
    <subcellularLocation>
        <location evidence="8">Cell membrane</location>
        <topology evidence="1">Multi-pass membrane protein</topology>
    </subcellularLocation>
</comment>
<comment type="induction">
    <text evidence="5">Expression is highly induced in a single triazole-resistant isolate (DI16-8).</text>
</comment>
<comment type="similarity">
    <text evidence="7">Belongs to the ABC transporter superfamily. ABCG family. PDR (TC 3.A.1.205) subfamily.</text>
</comment>
<gene>
    <name evidence="6" type="primary">abcI</name>
    <name type="ORF">AFUA_5G09460</name>
</gene>
<keyword id="KW-0067">ATP-binding</keyword>
<keyword id="KW-1003">Cell membrane</keyword>
<keyword id="KW-0325">Glycoprotein</keyword>
<keyword id="KW-0472">Membrane</keyword>
<keyword id="KW-0547">Nucleotide-binding</keyword>
<keyword id="KW-1185">Reference proteome</keyword>
<keyword id="KW-0677">Repeat</keyword>
<keyword id="KW-0812">Transmembrane</keyword>
<keyword id="KW-1133">Transmembrane helix</keyword>
<keyword id="KW-0813">Transport</keyword>
<accession>Q4WUS1</accession>
<sequence>MDEKPAVSESSNGSDVDSLSTASAYEQHRERLRDANPQGVTSHRSGVNVKEAEEEFSELNRQFSTISHQAHCLSKQISRASKPTGKTEDVERSDSPADSDEPWDLETALRGNRDAETAAGIRSKRIGVIWDNLTVRGMGGVKTYIKTFPDAIIDFFNVPETIMHMLGYGKKGKEFEILRNFRGVLQPGEMVLVLGRPGSGCTTFLKTITNQRFGYTSIDGDVLYGIFDADTFAKRFRGEAVYNQEDDVHQPTLTVKQTLGFALDTKTPGKRPLGVSKAEFREKVINMLLKMFNIEHTANTVIGNQFIRGVSGGERRRVSIAEMMITSATVLAWDNSTRGLDASTALDFAKSLRIMTNIYKTTTFVSLYQASENIYKQFDKVLVIDSGRQVFFGPASEARSYFESLGFKERPRQTTPDYLTGCTDPFEREFKEGRSEDDVPSTPDSLVEAFNRSSYSERLAQEMDAYRKKLEQEKHVYEDFEIANQEAKRKFTPKSSVYSIPFHLQIWALMQRQFLIKWQDRFAQTVSWITSTGVAIILGTVWLRLPKTSAGAFTRGGLLFISLLFNGFQAFSELVSTMMGRSIVNKHRQFTFYRPSALWIAQILVDTTFAIARILVFSIIVYFMCGLVLDAGAFFTFILIIVLGYLCMTCFFRVIGCMSPDFDYAMKFASVVITLFVLTSGYLIQWSSEQEWLRWLYYINPFGLGFAALMVNEFKDLTMTCTADSLVPSGPGYDDMASRVCTLAGGEPGSVIIPGASYLAKTFSYFPGDLWRNFGIMVALTVGFLTLNLYHGETLQFGAGGRTVTFYQKENKERRALNGALMEKRTNRESKDQSAANLKITSKSVFTWEDVCYDVPVPSGTRRLLQSVYGYVQPGKLTALMGASGAGKTTLLDVLASRKNIGVISGNILVDGAPPPGSFLRTVSYAEQLDIHEPMQTVREALRFSADLRQPYETPQSEKYEYVEGIIQLLELEDLADAIIGTPETGLSVEERKRVTIGVELAAKPELLLFLDEPTSGLDSQSAFNIIRFLRKLAAAGQAILCTIHQPNSALFENFDRLLLLQRGGECVYFGDIGEDSHVLLDYFRRNGADCPPDANPAEWMLDAIGAGQTRRIGDRDWGEIWRTSSEFEQVKREIIQIKAQRAEEVRQSGGSQIIVREYATPLWHQIKVVCKRTNIVFWRSRNYGFTRLFNHVVIALVTGLAFLNLDDSRASLQYRIFVIFNVTVLPAIILQQVEPRFEFSRLVFFRESACKSYSQFAFALSMVIAELPYSILCAVCFFLPLYYIPGFQAAPSRAGYQFLMVLITELFSVTLGQMISALTPNSFIASQINPPIVIIFSLFCGVAIPRPQMPGFWRAWLYQLDPFTRLISGMVTTELHGRTVSCSPSEFNRFQAPENQTCGEYMLPFFERGGLGYLADNTTQACEYCAYKIGDEFYSAFSMSFNTRWRDLGIFLAFIGSNLIILFLAVSFMSPRCRLRYKLIYDIF</sequence>
<dbReference type="EMBL" id="AAHF01000003">
    <property type="protein sequence ID" value="EAL91655.1"/>
    <property type="molecule type" value="Genomic_DNA"/>
</dbReference>
<dbReference type="RefSeq" id="XP_753693.1">
    <property type="nucleotide sequence ID" value="XM_748600.1"/>
</dbReference>
<dbReference type="SMR" id="Q4WUS1"/>
<dbReference type="GlyCosmos" id="Q4WUS1">
    <property type="glycosylation" value="6 sites, No reported glycans"/>
</dbReference>
<dbReference type="EnsemblFungi" id="EAL91655">
    <property type="protein sequence ID" value="EAL91655"/>
    <property type="gene ID" value="AFUA_5G09460"/>
</dbReference>
<dbReference type="GeneID" id="3511229"/>
<dbReference type="KEGG" id="afm:AFUA_5G09460"/>
<dbReference type="eggNOG" id="KOG0065">
    <property type="taxonomic scope" value="Eukaryota"/>
</dbReference>
<dbReference type="HOGENOM" id="CLU_000604_35_0_1"/>
<dbReference type="InParanoid" id="Q4WUS1"/>
<dbReference type="OMA" id="QYWSDQS"/>
<dbReference type="OrthoDB" id="245989at2759"/>
<dbReference type="Proteomes" id="UP000002530">
    <property type="component" value="Chromosome 5"/>
</dbReference>
<dbReference type="GO" id="GO:0005886">
    <property type="term" value="C:plasma membrane"/>
    <property type="evidence" value="ECO:0007669"/>
    <property type="project" value="UniProtKB-SubCell"/>
</dbReference>
<dbReference type="GO" id="GO:0140359">
    <property type="term" value="F:ABC-type transporter activity"/>
    <property type="evidence" value="ECO:0007669"/>
    <property type="project" value="InterPro"/>
</dbReference>
<dbReference type="GO" id="GO:0005524">
    <property type="term" value="F:ATP binding"/>
    <property type="evidence" value="ECO:0007669"/>
    <property type="project" value="UniProtKB-KW"/>
</dbReference>
<dbReference type="GO" id="GO:0016887">
    <property type="term" value="F:ATP hydrolysis activity"/>
    <property type="evidence" value="ECO:0007669"/>
    <property type="project" value="InterPro"/>
</dbReference>
<dbReference type="CDD" id="cd03233">
    <property type="entry name" value="ABCG_PDR_domain1"/>
    <property type="match status" value="1"/>
</dbReference>
<dbReference type="CDD" id="cd03232">
    <property type="entry name" value="ABCG_PDR_domain2"/>
    <property type="match status" value="1"/>
</dbReference>
<dbReference type="FunFam" id="3.40.50.300:FF:001010">
    <property type="entry name" value="ABC multidrug transporter (Eurofung)"/>
    <property type="match status" value="1"/>
</dbReference>
<dbReference type="FunFam" id="3.40.50.300:FF:000054">
    <property type="entry name" value="ABC multidrug transporter atrF"/>
    <property type="match status" value="1"/>
</dbReference>
<dbReference type="Gene3D" id="3.40.50.300">
    <property type="entry name" value="P-loop containing nucleotide triphosphate hydrolases"/>
    <property type="match status" value="2"/>
</dbReference>
<dbReference type="InterPro" id="IPR003593">
    <property type="entry name" value="AAA+_ATPase"/>
</dbReference>
<dbReference type="InterPro" id="IPR013525">
    <property type="entry name" value="ABC2_TM"/>
</dbReference>
<dbReference type="InterPro" id="IPR029481">
    <property type="entry name" value="ABC_trans_N"/>
</dbReference>
<dbReference type="InterPro" id="IPR003439">
    <property type="entry name" value="ABC_transporter-like_ATP-bd"/>
</dbReference>
<dbReference type="InterPro" id="IPR017871">
    <property type="entry name" value="ABC_transporter-like_CS"/>
</dbReference>
<dbReference type="InterPro" id="IPR043926">
    <property type="entry name" value="ABCG_dom"/>
</dbReference>
<dbReference type="InterPro" id="IPR034001">
    <property type="entry name" value="ABCG_PDR_1"/>
</dbReference>
<dbReference type="InterPro" id="IPR034003">
    <property type="entry name" value="ABCG_PDR_2"/>
</dbReference>
<dbReference type="InterPro" id="IPR027417">
    <property type="entry name" value="P-loop_NTPase"/>
</dbReference>
<dbReference type="InterPro" id="IPR010929">
    <property type="entry name" value="PDR_CDR_ABC"/>
</dbReference>
<dbReference type="PANTHER" id="PTHR19241">
    <property type="entry name" value="ATP-BINDING CASSETTE TRANSPORTER"/>
    <property type="match status" value="1"/>
</dbReference>
<dbReference type="Pfam" id="PF01061">
    <property type="entry name" value="ABC2_membrane"/>
    <property type="match status" value="2"/>
</dbReference>
<dbReference type="Pfam" id="PF19055">
    <property type="entry name" value="ABC2_membrane_7"/>
    <property type="match status" value="1"/>
</dbReference>
<dbReference type="Pfam" id="PF00005">
    <property type="entry name" value="ABC_tran"/>
    <property type="match status" value="2"/>
</dbReference>
<dbReference type="Pfam" id="PF14510">
    <property type="entry name" value="ABC_trans_N"/>
    <property type="match status" value="1"/>
</dbReference>
<dbReference type="Pfam" id="PF06422">
    <property type="entry name" value="PDR_CDR"/>
    <property type="match status" value="1"/>
</dbReference>
<dbReference type="SMART" id="SM00382">
    <property type="entry name" value="AAA"/>
    <property type="match status" value="2"/>
</dbReference>
<dbReference type="SUPFAM" id="SSF52540">
    <property type="entry name" value="P-loop containing nucleoside triphosphate hydrolases"/>
    <property type="match status" value="2"/>
</dbReference>
<dbReference type="PROSITE" id="PS00211">
    <property type="entry name" value="ABC_TRANSPORTER_1"/>
    <property type="match status" value="1"/>
</dbReference>
<dbReference type="PROSITE" id="PS50893">
    <property type="entry name" value="ABC_TRANSPORTER_2"/>
    <property type="match status" value="2"/>
</dbReference>
<protein>
    <recommendedName>
        <fullName evidence="6">ABC multidrug transporter I</fullName>
    </recommendedName>
</protein>